<feature type="chain" id="PRO_1000046082" description="Ribosomal protein L11 methyltransferase">
    <location>
        <begin position="1"/>
        <end position="293"/>
    </location>
</feature>
<feature type="binding site" evidence="1">
    <location>
        <position position="145"/>
    </location>
    <ligand>
        <name>S-adenosyl-L-methionine</name>
        <dbReference type="ChEBI" id="CHEBI:59789"/>
    </ligand>
</feature>
<feature type="binding site" evidence="1">
    <location>
        <position position="166"/>
    </location>
    <ligand>
        <name>S-adenosyl-L-methionine</name>
        <dbReference type="ChEBI" id="CHEBI:59789"/>
    </ligand>
</feature>
<feature type="binding site" evidence="1">
    <location>
        <position position="188"/>
    </location>
    <ligand>
        <name>S-adenosyl-L-methionine</name>
        <dbReference type="ChEBI" id="CHEBI:59789"/>
    </ligand>
</feature>
<feature type="binding site" evidence="1">
    <location>
        <position position="230"/>
    </location>
    <ligand>
        <name>S-adenosyl-L-methionine</name>
        <dbReference type="ChEBI" id="CHEBI:59789"/>
    </ligand>
</feature>
<proteinExistence type="inferred from homology"/>
<organism>
    <name type="scientific">Salmonella paratyphi A (strain ATCC 9150 / SARB42)</name>
    <dbReference type="NCBI Taxonomy" id="295319"/>
    <lineage>
        <taxon>Bacteria</taxon>
        <taxon>Pseudomonadati</taxon>
        <taxon>Pseudomonadota</taxon>
        <taxon>Gammaproteobacteria</taxon>
        <taxon>Enterobacterales</taxon>
        <taxon>Enterobacteriaceae</taxon>
        <taxon>Salmonella</taxon>
    </lineage>
</organism>
<reference key="1">
    <citation type="journal article" date="2004" name="Nat. Genet.">
        <title>Comparison of genome degradation in Paratyphi A and Typhi, human-restricted serovars of Salmonella enterica that cause typhoid.</title>
        <authorList>
            <person name="McClelland M."/>
            <person name="Sanderson K.E."/>
            <person name="Clifton S.W."/>
            <person name="Latreille P."/>
            <person name="Porwollik S."/>
            <person name="Sabo A."/>
            <person name="Meyer R."/>
            <person name="Bieri T."/>
            <person name="Ozersky P."/>
            <person name="McLellan M."/>
            <person name="Harkins C.R."/>
            <person name="Wang C."/>
            <person name="Nguyen C."/>
            <person name="Berghoff A."/>
            <person name="Elliott G."/>
            <person name="Kohlberg S."/>
            <person name="Strong C."/>
            <person name="Du F."/>
            <person name="Carter J."/>
            <person name="Kremizki C."/>
            <person name="Layman D."/>
            <person name="Leonard S."/>
            <person name="Sun H."/>
            <person name="Fulton L."/>
            <person name="Nash W."/>
            <person name="Miner T."/>
            <person name="Minx P."/>
            <person name="Delehaunty K."/>
            <person name="Fronick C."/>
            <person name="Magrini V."/>
            <person name="Nhan M."/>
            <person name="Warren W."/>
            <person name="Florea L."/>
            <person name="Spieth J."/>
            <person name="Wilson R.K."/>
        </authorList>
    </citation>
    <scope>NUCLEOTIDE SEQUENCE [LARGE SCALE GENOMIC DNA]</scope>
    <source>
        <strain>ATCC 9150 / SARB42</strain>
    </source>
</reference>
<keyword id="KW-0963">Cytoplasm</keyword>
<keyword id="KW-0489">Methyltransferase</keyword>
<keyword id="KW-0949">S-adenosyl-L-methionine</keyword>
<keyword id="KW-0808">Transferase</keyword>
<sequence length="293" mass="31970">MPWIQLKLNTTGANAEELSDALMEAGAVSITFQDTHDTPVFEPLPGETRLWGDTDVIGLFDAETDMKDVVAILEQHPLLGAGFAHKIEQLEDKDWEREWMDNFHPMRFGERLWICPSWRDIPDENAVNVMLDPGLAFGTGTHPTTSLCLQWLDGLDLNGKTVIDFGCGSGILAIAALKLGAAKAIGIDIDPQAIQASRDNAERNGVSDRLELYLPKDQPEAMKADVVVANILAGPLRELAPLISVLPVEGGLLGLSGILASQAESVCDAYAELFTLDPVVEKEEWCRITGRKK</sequence>
<evidence type="ECO:0000255" key="1">
    <source>
        <dbReference type="HAMAP-Rule" id="MF_00735"/>
    </source>
</evidence>
<gene>
    <name evidence="1" type="primary">prmA</name>
    <name type="ordered locus">SPA3250</name>
</gene>
<dbReference type="EC" id="2.1.1.-" evidence="1"/>
<dbReference type="EMBL" id="CP000026">
    <property type="protein sequence ID" value="AAV79073.1"/>
    <property type="molecule type" value="Genomic_DNA"/>
</dbReference>
<dbReference type="RefSeq" id="WP_001145849.1">
    <property type="nucleotide sequence ID" value="NC_006511.1"/>
</dbReference>
<dbReference type="SMR" id="Q5PJW5"/>
<dbReference type="KEGG" id="spt:SPA3250"/>
<dbReference type="HOGENOM" id="CLU_049382_4_1_6"/>
<dbReference type="Proteomes" id="UP000008185">
    <property type="component" value="Chromosome"/>
</dbReference>
<dbReference type="GO" id="GO:0005829">
    <property type="term" value="C:cytosol"/>
    <property type="evidence" value="ECO:0007669"/>
    <property type="project" value="TreeGrafter"/>
</dbReference>
<dbReference type="GO" id="GO:0016279">
    <property type="term" value="F:protein-lysine N-methyltransferase activity"/>
    <property type="evidence" value="ECO:0007669"/>
    <property type="project" value="TreeGrafter"/>
</dbReference>
<dbReference type="GO" id="GO:0032259">
    <property type="term" value="P:methylation"/>
    <property type="evidence" value="ECO:0007669"/>
    <property type="project" value="UniProtKB-KW"/>
</dbReference>
<dbReference type="CDD" id="cd02440">
    <property type="entry name" value="AdoMet_MTases"/>
    <property type="match status" value="1"/>
</dbReference>
<dbReference type="FunFam" id="3.40.50.150:FF:000021">
    <property type="entry name" value="Ribosomal protein L11 methyltransferase"/>
    <property type="match status" value="1"/>
</dbReference>
<dbReference type="Gene3D" id="3.40.50.150">
    <property type="entry name" value="Vaccinia Virus protein VP39"/>
    <property type="match status" value="1"/>
</dbReference>
<dbReference type="HAMAP" id="MF_00735">
    <property type="entry name" value="Methyltr_PrmA"/>
    <property type="match status" value="1"/>
</dbReference>
<dbReference type="InterPro" id="IPR050078">
    <property type="entry name" value="Ribosomal_L11_MeTrfase_PrmA"/>
</dbReference>
<dbReference type="InterPro" id="IPR004498">
    <property type="entry name" value="Ribosomal_PrmA_MeTrfase"/>
</dbReference>
<dbReference type="InterPro" id="IPR029063">
    <property type="entry name" value="SAM-dependent_MTases_sf"/>
</dbReference>
<dbReference type="NCBIfam" id="TIGR00406">
    <property type="entry name" value="prmA"/>
    <property type="match status" value="1"/>
</dbReference>
<dbReference type="PANTHER" id="PTHR43648">
    <property type="entry name" value="ELECTRON TRANSFER FLAVOPROTEIN BETA SUBUNIT LYSINE METHYLTRANSFERASE"/>
    <property type="match status" value="1"/>
</dbReference>
<dbReference type="PANTHER" id="PTHR43648:SF1">
    <property type="entry name" value="ELECTRON TRANSFER FLAVOPROTEIN BETA SUBUNIT LYSINE METHYLTRANSFERASE"/>
    <property type="match status" value="1"/>
</dbReference>
<dbReference type="Pfam" id="PF06325">
    <property type="entry name" value="PrmA"/>
    <property type="match status" value="1"/>
</dbReference>
<dbReference type="PIRSF" id="PIRSF000401">
    <property type="entry name" value="RPL11_MTase"/>
    <property type="match status" value="1"/>
</dbReference>
<dbReference type="SUPFAM" id="SSF53335">
    <property type="entry name" value="S-adenosyl-L-methionine-dependent methyltransferases"/>
    <property type="match status" value="1"/>
</dbReference>
<protein>
    <recommendedName>
        <fullName evidence="1">Ribosomal protein L11 methyltransferase</fullName>
        <shortName evidence="1">L11 Mtase</shortName>
        <ecNumber evidence="1">2.1.1.-</ecNumber>
    </recommendedName>
</protein>
<name>PRMA_SALPA</name>
<accession>Q5PJW5</accession>
<comment type="function">
    <text evidence="1">Methylates ribosomal protein L11.</text>
</comment>
<comment type="catalytic activity">
    <reaction evidence="1">
        <text>L-lysyl-[protein] + 3 S-adenosyl-L-methionine = N(6),N(6),N(6)-trimethyl-L-lysyl-[protein] + 3 S-adenosyl-L-homocysteine + 3 H(+)</text>
        <dbReference type="Rhea" id="RHEA:54192"/>
        <dbReference type="Rhea" id="RHEA-COMP:9752"/>
        <dbReference type="Rhea" id="RHEA-COMP:13826"/>
        <dbReference type="ChEBI" id="CHEBI:15378"/>
        <dbReference type="ChEBI" id="CHEBI:29969"/>
        <dbReference type="ChEBI" id="CHEBI:57856"/>
        <dbReference type="ChEBI" id="CHEBI:59789"/>
        <dbReference type="ChEBI" id="CHEBI:61961"/>
    </reaction>
</comment>
<comment type="subcellular location">
    <subcellularLocation>
        <location evidence="1">Cytoplasm</location>
    </subcellularLocation>
</comment>
<comment type="similarity">
    <text evidence="1">Belongs to the methyltransferase superfamily. PrmA family.</text>
</comment>